<sequence>MVEVEHWNTLRLRIYIGENDKWEGRPLYKVIVEKLREMGIAGATVYRGIYGFGKKSRVHSSDVIRLSTDLPIIVEVVDRGHNIEKVVNVIKPMIKDGMITVEPTIVLWVGTQEEIKKFEEDAIAERQ</sequence>
<protein>
    <recommendedName>
        <fullName>UPF0166 protein PH1503</fullName>
    </recommendedName>
</protein>
<dbReference type="EMBL" id="BA000001">
    <property type="protein sequence ID" value="BAA30611.1"/>
    <property type="status" value="ALT_INIT"/>
    <property type="molecule type" value="Genomic_DNA"/>
</dbReference>
<dbReference type="PIR" id="C71026">
    <property type="entry name" value="C71026"/>
</dbReference>
<dbReference type="RefSeq" id="WP_048053408.1">
    <property type="nucleotide sequence ID" value="NC_000961.1"/>
</dbReference>
<dbReference type="PDB" id="2DCL">
    <property type="method" value="X-ray"/>
    <property type="resolution" value="2.28 A"/>
    <property type="chains" value="A/B/C=1-127"/>
</dbReference>
<dbReference type="PDBsum" id="2DCL"/>
<dbReference type="SMR" id="O59172"/>
<dbReference type="MINT" id="O59172"/>
<dbReference type="STRING" id="70601.gene:9378485"/>
<dbReference type="EnsemblBacteria" id="BAA30611">
    <property type="protein sequence ID" value="BAA30611"/>
    <property type="gene ID" value="BAA30611"/>
</dbReference>
<dbReference type="GeneID" id="1443821"/>
<dbReference type="KEGG" id="pho:PH1503"/>
<dbReference type="eggNOG" id="arCOG04967">
    <property type="taxonomic scope" value="Archaea"/>
</dbReference>
<dbReference type="OrthoDB" id="8505at2157"/>
<dbReference type="EvolutionaryTrace" id="O59172"/>
<dbReference type="Proteomes" id="UP000000752">
    <property type="component" value="Chromosome"/>
</dbReference>
<dbReference type="Gene3D" id="3.30.70.120">
    <property type="match status" value="1"/>
</dbReference>
<dbReference type="InterPro" id="IPR011322">
    <property type="entry name" value="N-reg_PII-like_a/b"/>
</dbReference>
<dbReference type="InterPro" id="IPR015867">
    <property type="entry name" value="N-reg_PII/ATP_PRibTrfase_C"/>
</dbReference>
<dbReference type="InterPro" id="IPR003793">
    <property type="entry name" value="UPF0166"/>
</dbReference>
<dbReference type="PANTHER" id="PTHR35983">
    <property type="entry name" value="UPF0166 PROTEIN TM_0021"/>
    <property type="match status" value="1"/>
</dbReference>
<dbReference type="PANTHER" id="PTHR35983:SF1">
    <property type="entry name" value="UPF0166 PROTEIN TM_0021"/>
    <property type="match status" value="1"/>
</dbReference>
<dbReference type="Pfam" id="PF02641">
    <property type="entry name" value="DUF190"/>
    <property type="match status" value="1"/>
</dbReference>
<dbReference type="SUPFAM" id="SSF54913">
    <property type="entry name" value="GlnB-like"/>
    <property type="match status" value="1"/>
</dbReference>
<evidence type="ECO:0000305" key="1"/>
<evidence type="ECO:0007829" key="2">
    <source>
        <dbReference type="PDB" id="2DCL"/>
    </source>
</evidence>
<proteinExistence type="evidence at protein level"/>
<reference key="1">
    <citation type="journal article" date="1998" name="DNA Res.">
        <title>Complete sequence and gene organization of the genome of a hyper-thermophilic archaebacterium, Pyrococcus horikoshii OT3.</title>
        <authorList>
            <person name="Kawarabayasi Y."/>
            <person name="Sawada M."/>
            <person name="Horikawa H."/>
            <person name="Haikawa Y."/>
            <person name="Hino Y."/>
            <person name="Yamamoto S."/>
            <person name="Sekine M."/>
            <person name="Baba S."/>
            <person name="Kosugi H."/>
            <person name="Hosoyama A."/>
            <person name="Nagai Y."/>
            <person name="Sakai M."/>
            <person name="Ogura K."/>
            <person name="Otsuka R."/>
            <person name="Nakazawa H."/>
            <person name="Takamiya M."/>
            <person name="Ohfuku Y."/>
            <person name="Funahashi T."/>
            <person name="Tanaka T."/>
            <person name="Kudoh Y."/>
            <person name="Yamazaki J."/>
            <person name="Kushida N."/>
            <person name="Oguchi A."/>
            <person name="Aoki K."/>
            <person name="Yoshizawa T."/>
            <person name="Nakamura Y."/>
            <person name="Robb F.T."/>
            <person name="Horikoshi K."/>
            <person name="Masuchi Y."/>
            <person name="Shizuya H."/>
            <person name="Kikuchi H."/>
        </authorList>
    </citation>
    <scope>NUCLEOTIDE SEQUENCE [LARGE SCALE GENOMIC DNA]</scope>
    <source>
        <strain>ATCC 700860 / DSM 12428 / JCM 9974 / NBRC 100139 / OT-3</strain>
    </source>
</reference>
<organism>
    <name type="scientific">Pyrococcus horikoshii (strain ATCC 700860 / DSM 12428 / JCM 9974 / NBRC 100139 / OT-3)</name>
    <dbReference type="NCBI Taxonomy" id="70601"/>
    <lineage>
        <taxon>Archaea</taxon>
        <taxon>Methanobacteriati</taxon>
        <taxon>Methanobacteriota</taxon>
        <taxon>Thermococci</taxon>
        <taxon>Thermococcales</taxon>
        <taxon>Thermococcaceae</taxon>
        <taxon>Pyrococcus</taxon>
    </lineage>
</organism>
<gene>
    <name type="ordered locus">PH1503</name>
</gene>
<keyword id="KW-0002">3D-structure</keyword>
<accession>O59172</accession>
<feature type="chain" id="PRO_0000185235" description="UPF0166 protein PH1503">
    <location>
        <begin position="1"/>
        <end position="127"/>
    </location>
</feature>
<feature type="strand" evidence="2">
    <location>
        <begin position="5"/>
        <end position="17"/>
    </location>
</feature>
<feature type="helix" evidence="2">
    <location>
        <begin position="27"/>
        <end position="37"/>
    </location>
</feature>
<feature type="strand" evidence="2">
    <location>
        <begin position="43"/>
        <end position="47"/>
    </location>
</feature>
<feature type="strand" evidence="2">
    <location>
        <begin position="49"/>
        <end position="52"/>
    </location>
</feature>
<feature type="strand" evidence="2">
    <location>
        <begin position="71"/>
        <end position="79"/>
    </location>
</feature>
<feature type="helix" evidence="2">
    <location>
        <begin position="80"/>
        <end position="90"/>
    </location>
</feature>
<feature type="turn" evidence="2">
    <location>
        <begin position="91"/>
        <end position="93"/>
    </location>
</feature>
<feature type="strand" evidence="2">
    <location>
        <begin position="95"/>
        <end position="103"/>
    </location>
</feature>
<feature type="strand" evidence="2">
    <location>
        <begin position="105"/>
        <end position="108"/>
    </location>
</feature>
<comment type="similarity">
    <text evidence="1">Belongs to the UPF0166 family.</text>
</comment>
<comment type="sequence caution" evidence="1">
    <conflict type="erroneous initiation">
        <sequence resource="EMBL-CDS" id="BAA30611"/>
    </conflict>
</comment>
<name>Y1503_PYRHO</name>